<dbReference type="EC" id="1.14.-.-" evidence="4"/>
<dbReference type="EMBL" id="MSZS01000014">
    <property type="protein sequence ID" value="PKX88480.1"/>
    <property type="molecule type" value="Genomic_DNA"/>
</dbReference>
<dbReference type="SMR" id="A0A2I1BSU0"/>
<dbReference type="STRING" id="1392255.A0A2I1BSU0"/>
<dbReference type="GlyCosmos" id="A0A2I1BSU0">
    <property type="glycosylation" value="3 sites, No reported glycans"/>
</dbReference>
<dbReference type="VEuPathDB" id="FungiDB:P174DRAFT_425991"/>
<dbReference type="OMA" id="HIAYIIA"/>
<dbReference type="OrthoDB" id="66881at2759"/>
<dbReference type="UniPathway" id="UPA00213"/>
<dbReference type="Proteomes" id="UP000234474">
    <property type="component" value="Unassembled WGS sequence"/>
</dbReference>
<dbReference type="GO" id="GO:0016020">
    <property type="term" value="C:membrane"/>
    <property type="evidence" value="ECO:0007669"/>
    <property type="project" value="UniProtKB-SubCell"/>
</dbReference>
<dbReference type="GO" id="GO:0004497">
    <property type="term" value="F:monooxygenase activity"/>
    <property type="evidence" value="ECO:0007669"/>
    <property type="project" value="UniProtKB-KW"/>
</dbReference>
<dbReference type="GO" id="GO:0016491">
    <property type="term" value="F:oxidoreductase activity"/>
    <property type="evidence" value="ECO:0000314"/>
    <property type="project" value="UniProt"/>
</dbReference>
<dbReference type="GO" id="GO:0140782">
    <property type="term" value="P:novofumigatonin biosynthetic process"/>
    <property type="evidence" value="ECO:0000314"/>
    <property type="project" value="GO_Central"/>
</dbReference>
<dbReference type="Gene3D" id="3.50.50.60">
    <property type="entry name" value="FAD/NAD(P)-binding domain"/>
    <property type="match status" value="2"/>
</dbReference>
<dbReference type="InterPro" id="IPR050775">
    <property type="entry name" value="FAD-binding_Monooxygenases"/>
</dbReference>
<dbReference type="InterPro" id="IPR036188">
    <property type="entry name" value="FAD/NAD-bd_sf"/>
</dbReference>
<dbReference type="PANTHER" id="PTHR43098:SF2">
    <property type="entry name" value="FAD-BINDING MONOOXYGENASE AUSB-RELATED"/>
    <property type="match status" value="1"/>
</dbReference>
<dbReference type="PANTHER" id="PTHR43098">
    <property type="entry name" value="L-ORNITHINE N(5)-MONOOXYGENASE-RELATED"/>
    <property type="match status" value="1"/>
</dbReference>
<dbReference type="Pfam" id="PF13450">
    <property type="entry name" value="NAD_binding_8"/>
    <property type="match status" value="1"/>
</dbReference>
<dbReference type="PRINTS" id="PR00411">
    <property type="entry name" value="PNDRDTASEI"/>
</dbReference>
<dbReference type="SUPFAM" id="SSF51905">
    <property type="entry name" value="FAD/NAD(P)-binding domain"/>
    <property type="match status" value="2"/>
</dbReference>
<comment type="function">
    <text evidence="4">Chermesin D/asnovolin J monooxidase; part of the gene cluster that mediates the biosynthesis of novofumigatonin, a heavily oxygenated meroterpenoid containing a unique orthoester moiety (PubMed:29968715). The first step of the pathway is the synthesis of 3,5-dimethylorsellinic acid (DMOA) by the polyketide synthase nvfA via condensation of one acetyl-CoA starter unit with 3 malonyl-CoA units and 2 methylations (PubMed:29968715). DMOA is then converted to farnesyl-DMOA by the farnesyltransferase nvfB (PubMed:29968715). Epoxydation by FAD-dependent monooxygenase nvfK, followed by a protonation-initiated cyclization catalyzed by the terpene cyclase nvfL leads to the production of asnavolin H (PubMed:29968715). The short chain dehydrogenase nvfC then as a 3-OH dehydrogenase of asnovolin H to yield chemesin D (PubMed:29968715). There are two branches to synthesize asnovolin A from chemesin D (PubMed:29968715). In one branch, chemesin D undergoes Baeyer-Villiger oxidation by nvfH, methylation by nvfJ, and enoyl reduction by the nvfM D enoylreductase that reduces the double bond between C-5'and C-6', to form respectively asnovolin I, asnovolin K, and asnovolin A (PubMed:29968715). In the other branch, the methylation precedes the Baeyer-Villiger oxidation and the enoyl reduction to yield asnovolin A via the asnovolin J intermediate (PubMed:29968715). Asnovolin A is further converted to fumigatonoid A by the Fe(II)/2-oxoglutarate-dependent dioxygenase nvfI that catalyzes an endoperoxidation reaction (PubMed:29968715). The alpha/beta hydrolase nvfD then acts as an epimerase that converts fumigatonoid A to its C-5' epimer, which then undergoes spontaneous or nvfD-catalyzed lactonization (PubMed:29968715). The following step utilizes the ketoreductase nvfG to produce fumigatonoid B (PubMed:29968715). The dioxygenase nvfE further converts fumigatonoid B into fumigatonoid C (PubMed:29968715). Finally the Fe(II)/2-oxoglutarate-dependent dioxygenase nvfF catalyzes two rounds of oxidation to transform fumigatonoid C into the end product, novofumigatonin A (PubMed:29968715).</text>
</comment>
<comment type="catalytic activity">
    <reaction evidence="4">
        <text>chermesin D + AH2 + O2 = asnovolin I + A + H2O</text>
        <dbReference type="Rhea" id="RHEA:67048"/>
        <dbReference type="ChEBI" id="CHEBI:13193"/>
        <dbReference type="ChEBI" id="CHEBI:15377"/>
        <dbReference type="ChEBI" id="CHEBI:15379"/>
        <dbReference type="ChEBI" id="CHEBI:17499"/>
        <dbReference type="ChEBI" id="CHEBI:156464"/>
        <dbReference type="ChEBI" id="CHEBI:167684"/>
    </reaction>
    <physiologicalReaction direction="left-to-right" evidence="4">
        <dbReference type="Rhea" id="RHEA:67049"/>
    </physiologicalReaction>
</comment>
<comment type="catalytic activity">
    <reaction evidence="4">
        <text>asnovolin J + AH2 + O2 = asnovolin A + A + H2O</text>
        <dbReference type="Rhea" id="RHEA:67052"/>
        <dbReference type="ChEBI" id="CHEBI:13193"/>
        <dbReference type="ChEBI" id="CHEBI:15377"/>
        <dbReference type="ChEBI" id="CHEBI:15379"/>
        <dbReference type="ChEBI" id="CHEBI:17499"/>
        <dbReference type="ChEBI" id="CHEBI:156459"/>
        <dbReference type="ChEBI" id="CHEBI:167683"/>
    </reaction>
    <physiologicalReaction direction="left-to-right" evidence="4">
        <dbReference type="Rhea" id="RHEA:67053"/>
    </physiologicalReaction>
</comment>
<comment type="cofactor">
    <cofactor evidence="1">
        <name>FAD</name>
        <dbReference type="ChEBI" id="CHEBI:57692"/>
    </cofactor>
    <text evidence="1">Binds 1 FAD per subunit.</text>
</comment>
<comment type="pathway">
    <text evidence="4">Secondary metabolite biosynthesis; terpenoid biosynthesis.</text>
</comment>
<comment type="subcellular location">
    <subcellularLocation>
        <location evidence="2">Membrane</location>
        <topology evidence="2">Single-pass membrane protein</topology>
    </subcellularLocation>
</comment>
<comment type="disruption phenotype">
    <text evidence="4">Completely abolishes the production of novofumigatonin, but accumulates asnovolin J.</text>
</comment>
<comment type="similarity">
    <text evidence="6">Belongs to the FAD-binding monooxygenase family.</text>
</comment>
<evidence type="ECO:0000250" key="1">
    <source>
        <dbReference type="UniProtKB" id="H3JQW0"/>
    </source>
</evidence>
<evidence type="ECO:0000255" key="2"/>
<evidence type="ECO:0000255" key="3">
    <source>
        <dbReference type="PROSITE-ProRule" id="PRU00498"/>
    </source>
</evidence>
<evidence type="ECO:0000269" key="4">
    <source>
    </source>
</evidence>
<evidence type="ECO:0000303" key="5">
    <source>
    </source>
</evidence>
<evidence type="ECO:0000305" key="6"/>
<gene>
    <name evidence="5" type="primary">nvfH</name>
    <name type="ORF">P174DRAFT_425991</name>
</gene>
<reference key="1">
    <citation type="journal article" date="2018" name="Proc. Natl. Acad. Sci. U.S.A.">
        <title>Linking secondary metabolites to gene clusters through genome sequencing of six diverse Aspergillus species.</title>
        <authorList>
            <person name="Kjaerboelling I."/>
            <person name="Vesth T.C."/>
            <person name="Frisvad J.C."/>
            <person name="Nybo J.L."/>
            <person name="Theobald S."/>
            <person name="Kuo A."/>
            <person name="Bowyer P."/>
            <person name="Matsuda Y."/>
            <person name="Mondo S."/>
            <person name="Lyhne E.K."/>
            <person name="Kogle M.E."/>
            <person name="Clum A."/>
            <person name="Lipzen A."/>
            <person name="Salamov A."/>
            <person name="Ngan C.Y."/>
            <person name="Daum C."/>
            <person name="Chiniquy J."/>
            <person name="Barry K."/>
            <person name="LaButti K."/>
            <person name="Haridas S."/>
            <person name="Simmons B.A."/>
            <person name="Magnuson J.K."/>
            <person name="Mortensen U.H."/>
            <person name="Larsen T.O."/>
            <person name="Grigoriev I.V."/>
            <person name="Baker S.E."/>
            <person name="Andersen M.R."/>
        </authorList>
    </citation>
    <scope>NUCLEOTIDE SEQUENCE [LARGE SCALE GENOMIC DNA]</scope>
    <source>
        <strain>IBT 16806</strain>
    </source>
</reference>
<reference key="2">
    <citation type="journal article" date="2018" name="Nat. Commun.">
        <title>Novofumigatonin biosynthesis involves a non-heme iron-dependent endoperoxide isomerase for orthoester formation.</title>
        <authorList>
            <person name="Matsuda Y."/>
            <person name="Bai T."/>
            <person name="Phippen C.B.W."/>
            <person name="Noedvig C.S."/>
            <person name="Kjaerboelling I."/>
            <person name="Vesth T.C."/>
            <person name="Andersen M.R."/>
            <person name="Mortensen U.H."/>
            <person name="Gotfredsen C.H."/>
            <person name="Abe I."/>
            <person name="Larsen T.O."/>
        </authorList>
    </citation>
    <scope>FUNCTION</scope>
    <scope>DISRUPTION PHENOTYPE</scope>
    <scope>CATALYTIC ACTIVITY</scope>
    <scope>PATHWAY</scope>
</reference>
<proteinExistence type="evidence at protein level"/>
<protein>
    <recommendedName>
        <fullName evidence="5">Chermesin D/asnovolin J monooxidase nvfH</fullName>
        <ecNumber evidence="4">1.14.-.-</ecNumber>
    </recommendedName>
    <alternativeName>
        <fullName evidence="5">Baeyer-Villiger monooxygenase nvfH</fullName>
    </alternativeName>
    <alternativeName>
        <fullName evidence="5">Novofumigatonin biosynthesis cluster protein H</fullName>
    </alternativeName>
</protein>
<keyword id="KW-0274">FAD</keyword>
<keyword id="KW-0285">Flavoprotein</keyword>
<keyword id="KW-0325">Glycoprotein</keyword>
<keyword id="KW-0472">Membrane</keyword>
<keyword id="KW-0503">Monooxygenase</keyword>
<keyword id="KW-0521">NADP</keyword>
<keyword id="KW-0560">Oxidoreductase</keyword>
<keyword id="KW-1185">Reference proteome</keyword>
<keyword id="KW-0812">Transmembrane</keyword>
<keyword id="KW-1133">Transmembrane helix</keyword>
<feature type="chain" id="PRO_0000453083" description="Chermesin D/asnovolin J monooxidase nvfH">
    <location>
        <begin position="1"/>
        <end position="661"/>
    </location>
</feature>
<feature type="transmembrane region" description="Helical" evidence="2">
    <location>
        <begin position="89"/>
        <end position="111"/>
    </location>
</feature>
<feature type="binding site" evidence="1">
    <location>
        <begin position="128"/>
        <end position="131"/>
    </location>
    <ligand>
        <name>FAD</name>
        <dbReference type="ChEBI" id="CHEBI:57692"/>
    </ligand>
</feature>
<feature type="binding site" evidence="1">
    <location>
        <begin position="138"/>
        <end position="140"/>
    </location>
    <ligand>
        <name>NADP(+)</name>
        <dbReference type="ChEBI" id="CHEBI:58349"/>
    </ligand>
</feature>
<feature type="binding site" evidence="1">
    <location>
        <begin position="140"/>
        <end position="141"/>
    </location>
    <ligand>
        <name>FAD</name>
        <dbReference type="ChEBI" id="CHEBI:57692"/>
    </ligand>
</feature>
<feature type="binding site" evidence="1">
    <location>
        <position position="146"/>
    </location>
    <ligand>
        <name>FAD</name>
        <dbReference type="ChEBI" id="CHEBI:57692"/>
    </ligand>
</feature>
<feature type="binding site" evidence="1">
    <location>
        <begin position="286"/>
        <end position="292"/>
    </location>
    <ligand>
        <name>NADP(+)</name>
        <dbReference type="ChEBI" id="CHEBI:58349"/>
    </ligand>
</feature>
<feature type="binding site" evidence="1">
    <location>
        <begin position="309"/>
        <end position="310"/>
    </location>
    <ligand>
        <name>NADP(+)</name>
        <dbReference type="ChEBI" id="CHEBI:58349"/>
    </ligand>
</feature>
<feature type="site" description="Transition state stabilizer" evidence="1">
    <location>
        <position position="428"/>
    </location>
</feature>
<feature type="glycosylation site" description="N-linked (GlcNAc...) asparagine" evidence="3">
    <location>
        <position position="12"/>
    </location>
</feature>
<feature type="glycosylation site" description="N-linked (GlcNAc...) asparagine" evidence="3">
    <location>
        <position position="382"/>
    </location>
</feature>
<feature type="glycosylation site" description="N-linked (GlcNAc...) asparagine" evidence="3">
    <location>
        <position position="538"/>
    </location>
</feature>
<organism>
    <name type="scientific">Aspergillus novofumigatus (strain IBT 16806)</name>
    <dbReference type="NCBI Taxonomy" id="1392255"/>
    <lineage>
        <taxon>Eukaryota</taxon>
        <taxon>Fungi</taxon>
        <taxon>Dikarya</taxon>
        <taxon>Ascomycota</taxon>
        <taxon>Pezizomycotina</taxon>
        <taxon>Eurotiomycetes</taxon>
        <taxon>Eurotiomycetidae</taxon>
        <taxon>Eurotiales</taxon>
        <taxon>Aspergillaceae</taxon>
        <taxon>Aspergillus</taxon>
        <taxon>Aspergillus subgen. Fumigati</taxon>
    </lineage>
</organism>
<name>NVFH_ASPN1</name>
<accession>A0A2I1BSU0</accession>
<sequence length="661" mass="74453">MDVTEIAEQTLNTSCLSPACQQQDYAEIEKRYEAERHQQLQTRGKIPDVNIRTNTRFEQFSKDPWLDDSNKRQQIQYHQRRHNGKHHKVLIIGAGYGGLLFAVRIIQTGAFTADDILMVDTSGGFGGTWYWNRYPGLMCDVESYIYMPLLEETGYMPRAKYASGPELRVHAERIADTWKLSNRAMFGVTVKSLDWDEVGKHWSARGLVLDYEKDQSKKASLHLSADFVMLASGIFASPKIPDFTSILEYHGHMFHTSRWDYGCTGGSPENPKLCKLGDKKVGIIGTGATAIQVVPHLAQYSKELHVFQRTPSAVDKRDNHPTDPVWWNKMLQSEGPGWQKRRMENFNAFTGNEQPQPAVDMIADGWTSMPSFSIIGGSPESNATDYLHRMKAFDFPRQERIRARVRETVHNKEVAEALSPWYPGWCKRPCFHDHYLAAFNRPNVRLIDVRQSGIDHFTPKGLVADGREHEIDVFVFSTGYTTSRSSPGGRADIAITGRNGLTMEHKWQNGLATLHGVITRDFPNLFFPGPSQAGTCLNHTYTLDQLATHVAYIISKTLIKIGAADAGYSPRVVIEPTKEAEEDWAVQVLARAATHGALSQCTPGYYNRDGMASAMKSLSMEDKMKLGRMVSWGEGIGSYMDQIVNWRGQGELRGLEIHCVD</sequence>